<comment type="catalytic activity">
    <reaction evidence="1">
        <text>(R)-glycerate + ATP = (2R)-3-phosphoglycerate + ADP + H(+)</text>
        <dbReference type="Rhea" id="RHEA:23516"/>
        <dbReference type="ChEBI" id="CHEBI:15378"/>
        <dbReference type="ChEBI" id="CHEBI:16659"/>
        <dbReference type="ChEBI" id="CHEBI:30616"/>
        <dbReference type="ChEBI" id="CHEBI:58272"/>
        <dbReference type="ChEBI" id="CHEBI:456216"/>
        <dbReference type="EC" id="2.7.1.31"/>
    </reaction>
</comment>
<comment type="subcellular location">
    <subcellularLocation>
        <location evidence="1">Cytoplasm</location>
    </subcellularLocation>
</comment>
<comment type="similarity">
    <text evidence="3">Belongs to the glycerate kinase type-2 family.</text>
</comment>
<sequence>MAAALQVLRHLARAPSGPLLWGGPLARMASSMALAEQARQLFESTVGAVLPGPLLQRALSLDPDSGELKVRDRSFQLRQNLYLVGFGKAVLGMAAAAEELLGQHLVQGVISVPKGIRAAMEHAGKQEMLLKPHSRIQVFEGAEDNLPDRDALRAALAIRQLAEGLTADDLLLVLISGGGSALLPAPIPPVTLEEKQTLTKLLAARGATIQELNTIRKALSQLKGGGLAQAAYPAQVVSLILSDVVGDPVEVIASGPTVASIHSVQDCLYILNRYGLRTALPRSVKTVLARADSDPHGPHTCGHVLNVILGSNALALAEAQKQAEALGYRAVVLSTAIQGDVKSVAQFYGLLARVAGAHLALPGAGASVQEDERLYELAADLQLPDLQLKEALEAVVGAPGPVCLLAGGEPTVRLQGSGKGGRNQELALRVGVELGQWPLGTVDVLFLSGGTDGQDGPTEAAGAWVRPELTSQAAAEGLDVATFLAHNDSHTFFCRFQGGAHLLHTGLTGTNVTDAHFLFLHPQ</sequence>
<reference key="1">
    <citation type="submission" date="2005-09" db="EMBL/GenBank/DDBJ databases">
        <authorList>
            <consortium name="NIH - Mammalian Gene Collection (MGC) project"/>
        </authorList>
    </citation>
    <scope>NUCLEOTIDE SEQUENCE [LARGE SCALE MRNA]</scope>
    <source>
        <strain>Crossbred X Angus</strain>
        <tissue>Ileum</tissue>
    </source>
</reference>
<gene>
    <name type="primary">GLYCTK</name>
</gene>
<name>GLCTK_BOVIN</name>
<keyword id="KW-0007">Acetylation</keyword>
<keyword id="KW-0067">ATP-binding</keyword>
<keyword id="KW-0963">Cytoplasm</keyword>
<keyword id="KW-0418">Kinase</keyword>
<keyword id="KW-0547">Nucleotide-binding</keyword>
<keyword id="KW-0597">Phosphoprotein</keyword>
<keyword id="KW-1185">Reference proteome</keyword>
<keyword id="KW-0808">Transferase</keyword>
<accession>Q2KJF7</accession>
<protein>
    <recommendedName>
        <fullName>Glycerate kinase</fullName>
        <ecNumber>2.7.1.31</ecNumber>
    </recommendedName>
</protein>
<evidence type="ECO:0000250" key="1">
    <source>
        <dbReference type="UniProtKB" id="Q8IVS8"/>
    </source>
</evidence>
<evidence type="ECO:0000250" key="2">
    <source>
        <dbReference type="UniProtKB" id="Q8QZY2"/>
    </source>
</evidence>
<evidence type="ECO:0000305" key="3"/>
<organism>
    <name type="scientific">Bos taurus</name>
    <name type="common">Bovine</name>
    <dbReference type="NCBI Taxonomy" id="9913"/>
    <lineage>
        <taxon>Eukaryota</taxon>
        <taxon>Metazoa</taxon>
        <taxon>Chordata</taxon>
        <taxon>Craniata</taxon>
        <taxon>Vertebrata</taxon>
        <taxon>Euteleostomi</taxon>
        <taxon>Mammalia</taxon>
        <taxon>Eutheria</taxon>
        <taxon>Laurasiatheria</taxon>
        <taxon>Artiodactyla</taxon>
        <taxon>Ruminantia</taxon>
        <taxon>Pecora</taxon>
        <taxon>Bovidae</taxon>
        <taxon>Bovinae</taxon>
        <taxon>Bos</taxon>
    </lineage>
</organism>
<proteinExistence type="evidence at transcript level"/>
<dbReference type="EC" id="2.7.1.31"/>
<dbReference type="EMBL" id="BC105364">
    <property type="protein sequence ID" value="AAI05365.1"/>
    <property type="molecule type" value="mRNA"/>
</dbReference>
<dbReference type="RefSeq" id="NP_001039452.1">
    <property type="nucleotide sequence ID" value="NM_001045987.2"/>
</dbReference>
<dbReference type="RefSeq" id="XP_024838293.1">
    <property type="nucleotide sequence ID" value="XM_024982525.2"/>
</dbReference>
<dbReference type="RefSeq" id="XP_024838294.1">
    <property type="nucleotide sequence ID" value="XM_024982526.2"/>
</dbReference>
<dbReference type="SMR" id="Q2KJF7"/>
<dbReference type="FunCoup" id="Q2KJF7">
    <property type="interactions" value="236"/>
</dbReference>
<dbReference type="STRING" id="9913.ENSBTAP00000028914"/>
<dbReference type="PaxDb" id="9913-ENSBTAP00000028914"/>
<dbReference type="PeptideAtlas" id="Q2KJF7"/>
<dbReference type="Ensembl" id="ENSBTAT00000028914.7">
    <property type="protein sequence ID" value="ENSBTAP00000028914.6"/>
    <property type="gene ID" value="ENSBTAG00000021695.7"/>
</dbReference>
<dbReference type="GeneID" id="507949"/>
<dbReference type="KEGG" id="bta:507949"/>
<dbReference type="CTD" id="132158"/>
<dbReference type="VEuPathDB" id="HostDB:ENSBTAG00000021695"/>
<dbReference type="VGNC" id="VGNC:29429">
    <property type="gene designation" value="GLYCTK"/>
</dbReference>
<dbReference type="eggNOG" id="KOG3935">
    <property type="taxonomic scope" value="Eukaryota"/>
</dbReference>
<dbReference type="GeneTree" id="ENSGT00390000014365"/>
<dbReference type="InParanoid" id="Q2KJF7"/>
<dbReference type="OMA" id="GKAAWRM"/>
<dbReference type="OrthoDB" id="44918at2759"/>
<dbReference type="Reactome" id="R-BTA-70350">
    <property type="pathway name" value="Fructose catabolism"/>
</dbReference>
<dbReference type="Proteomes" id="UP000009136">
    <property type="component" value="Chromosome 22"/>
</dbReference>
<dbReference type="Bgee" id="ENSBTAG00000021695">
    <property type="expression patterns" value="Expressed in liver and 103 other cell types or tissues"/>
</dbReference>
<dbReference type="GO" id="GO:0005737">
    <property type="term" value="C:cytoplasm"/>
    <property type="evidence" value="ECO:0000250"/>
    <property type="project" value="UniProtKB"/>
</dbReference>
<dbReference type="GO" id="GO:0005829">
    <property type="term" value="C:cytosol"/>
    <property type="evidence" value="ECO:0007669"/>
    <property type="project" value="Ensembl"/>
</dbReference>
<dbReference type="GO" id="GO:0005794">
    <property type="term" value="C:Golgi apparatus"/>
    <property type="evidence" value="ECO:0007669"/>
    <property type="project" value="Ensembl"/>
</dbReference>
<dbReference type="GO" id="GO:0005524">
    <property type="term" value="F:ATP binding"/>
    <property type="evidence" value="ECO:0007669"/>
    <property type="project" value="UniProtKB-KW"/>
</dbReference>
<dbReference type="GO" id="GO:0008887">
    <property type="term" value="F:glycerate kinase activity"/>
    <property type="evidence" value="ECO:0000250"/>
    <property type="project" value="UniProtKB"/>
</dbReference>
<dbReference type="GO" id="GO:0006468">
    <property type="term" value="P:protein phosphorylation"/>
    <property type="evidence" value="ECO:0000250"/>
    <property type="project" value="UniProtKB"/>
</dbReference>
<dbReference type="FunFam" id="3.40.50.10180:FF:000001">
    <property type="entry name" value="Glycerate kinase"/>
    <property type="match status" value="1"/>
</dbReference>
<dbReference type="Gene3D" id="3.40.50.10180">
    <property type="entry name" value="Glycerate kinase, MOFRL-like N-terminal domain"/>
    <property type="match status" value="1"/>
</dbReference>
<dbReference type="Gene3D" id="3.40.1480.10">
    <property type="entry name" value="MOFRL domain"/>
    <property type="match status" value="1"/>
</dbReference>
<dbReference type="InterPro" id="IPR037035">
    <property type="entry name" value="GK-like_C_sf"/>
</dbReference>
<dbReference type="InterPro" id="IPR038614">
    <property type="entry name" value="GK_N_sf"/>
</dbReference>
<dbReference type="InterPro" id="IPR007835">
    <property type="entry name" value="MOFRL"/>
</dbReference>
<dbReference type="InterPro" id="IPR025286">
    <property type="entry name" value="MOFRL_assoc_dom"/>
</dbReference>
<dbReference type="InterPro" id="IPR039760">
    <property type="entry name" value="MOFRL_protein"/>
</dbReference>
<dbReference type="PANTHER" id="PTHR12227">
    <property type="entry name" value="GLYCERATE KINASE"/>
    <property type="match status" value="1"/>
</dbReference>
<dbReference type="PANTHER" id="PTHR12227:SF0">
    <property type="entry name" value="GLYCERATE KINASE"/>
    <property type="match status" value="1"/>
</dbReference>
<dbReference type="Pfam" id="PF13660">
    <property type="entry name" value="DUF4147"/>
    <property type="match status" value="1"/>
</dbReference>
<dbReference type="Pfam" id="PF05161">
    <property type="entry name" value="MOFRL"/>
    <property type="match status" value="1"/>
</dbReference>
<dbReference type="SUPFAM" id="SSF82544">
    <property type="entry name" value="GckA/TtuD-like"/>
    <property type="match status" value="1"/>
</dbReference>
<feature type="chain" id="PRO_0000287191" description="Glycerate kinase">
    <location>
        <begin position="1"/>
        <end position="523"/>
    </location>
</feature>
<feature type="modified residue" description="Phosphoserine" evidence="1">
    <location>
        <position position="60"/>
    </location>
</feature>
<feature type="modified residue" description="N6-acetyllysine" evidence="2">
    <location>
        <position position="200"/>
    </location>
</feature>